<name>NICA_HUMAN</name>
<gene>
    <name type="primary">NCSTN</name>
    <name type="synonym">KIAA0253</name>
    <name type="ORF">UNQ1874/PRO4317</name>
</gene>
<keyword id="KW-0002">3D-structure</keyword>
<keyword id="KW-0025">Alternative splicing</keyword>
<keyword id="KW-0968">Cytoplasmic vesicle</keyword>
<keyword id="KW-0225">Disease variant</keyword>
<keyword id="KW-1015">Disulfide bond</keyword>
<keyword id="KW-0325">Glycoprotein</keyword>
<keyword id="KW-0472">Membrane</keyword>
<keyword id="KW-0914">Notch signaling pathway</keyword>
<keyword id="KW-1267">Proteomics identification</keyword>
<keyword id="KW-1185">Reference proteome</keyword>
<keyword id="KW-0732">Signal</keyword>
<keyword id="KW-0812">Transmembrane</keyword>
<keyword id="KW-1133">Transmembrane helix</keyword>
<reference key="1">
    <citation type="journal article" date="2000" name="Nature">
        <title>Nicastrin modulates presenilin-mediated notch/glp-1 signal transduction and betaAPP processing.</title>
        <authorList>
            <person name="Yu G."/>
            <person name="Nishimura M."/>
            <person name="Arawaka S."/>
            <person name="Levitan D."/>
            <person name="Zhang L."/>
            <person name="Tandon A."/>
            <person name="Song Y.-Q."/>
            <person name="Rogaeva E."/>
            <person name="Chen F."/>
            <person name="Kawarai T."/>
            <person name="Supala A."/>
            <person name="Levesque L."/>
            <person name="Yu H."/>
            <person name="Yang D.-S."/>
            <person name="Holmes E."/>
            <person name="Milman P."/>
            <person name="Liang Y."/>
            <person name="Zhang D.M."/>
            <person name="Xu D.H."/>
            <person name="Sato C."/>
            <person name="Rogaev E."/>
            <person name="Smith M."/>
            <person name="Janus C."/>
            <person name="Zhang Y."/>
            <person name="Aebersold R."/>
            <person name="Farrer L.S."/>
            <person name="Sorbi S."/>
            <person name="Bruni A."/>
            <person name="Fraser P.E."/>
            <person name="St George-Hyslop P.H."/>
        </authorList>
    </citation>
    <scope>NUCLEOTIDE SEQUENCE [MRNA] (ISOFORM 1)</scope>
    <scope>IDENTIFICATION BY MASS SPECTROMETRY</scope>
    <scope>FUNCTION</scope>
    <scope>IDENTIFICATION IN THE GAMMA-SECRETASE COMPLEX</scope>
    <scope>INTERACTION WITH PSEN1 AND PSEN2</scope>
    <scope>SUBCELLULAR LOCATION</scope>
    <scope>GLYCOSYLATION</scope>
    <scope>TISSUE SPECIFICITY</scope>
    <scope>MUTAGENESIS OF 336-ASP-TYR-337</scope>
    <source>
        <tissue>Embryonic kidney</tissue>
    </source>
</reference>
<reference key="2">
    <citation type="journal article" date="2003" name="Genome Res.">
        <title>The secreted protein discovery initiative (SPDI), a large-scale effort to identify novel human secreted and transmembrane proteins: a bioinformatics assessment.</title>
        <authorList>
            <person name="Clark H.F."/>
            <person name="Gurney A.L."/>
            <person name="Abaya E."/>
            <person name="Baker K."/>
            <person name="Baldwin D.T."/>
            <person name="Brush J."/>
            <person name="Chen J."/>
            <person name="Chow B."/>
            <person name="Chui C."/>
            <person name="Crowley C."/>
            <person name="Currell B."/>
            <person name="Deuel B."/>
            <person name="Dowd P."/>
            <person name="Eaton D."/>
            <person name="Foster J.S."/>
            <person name="Grimaldi C."/>
            <person name="Gu Q."/>
            <person name="Hass P.E."/>
            <person name="Heldens S."/>
            <person name="Huang A."/>
            <person name="Kim H.S."/>
            <person name="Klimowski L."/>
            <person name="Jin Y."/>
            <person name="Johnson S."/>
            <person name="Lee J."/>
            <person name="Lewis L."/>
            <person name="Liao D."/>
            <person name="Mark M.R."/>
            <person name="Robbie E."/>
            <person name="Sanchez C."/>
            <person name="Schoenfeld J."/>
            <person name="Seshagiri S."/>
            <person name="Simmons L."/>
            <person name="Singh J."/>
            <person name="Smith V."/>
            <person name="Stinson J."/>
            <person name="Vagts A."/>
            <person name="Vandlen R.L."/>
            <person name="Watanabe C."/>
            <person name="Wieand D."/>
            <person name="Woods K."/>
            <person name="Xie M.-H."/>
            <person name="Yansura D.G."/>
            <person name="Yi S."/>
            <person name="Yu G."/>
            <person name="Yuan J."/>
            <person name="Zhang M."/>
            <person name="Zhang Z."/>
            <person name="Goddard A.D."/>
            <person name="Wood W.I."/>
            <person name="Godowski P.J."/>
            <person name="Gray A.M."/>
        </authorList>
    </citation>
    <scope>NUCLEOTIDE SEQUENCE [LARGE SCALE MRNA] (ISOFORM 1)</scope>
</reference>
<reference key="3">
    <citation type="journal article" date="2004" name="Nat. Genet.">
        <title>Complete sequencing and characterization of 21,243 full-length human cDNAs.</title>
        <authorList>
            <person name="Ota T."/>
            <person name="Suzuki Y."/>
            <person name="Nishikawa T."/>
            <person name="Otsuki T."/>
            <person name="Sugiyama T."/>
            <person name="Irie R."/>
            <person name="Wakamatsu A."/>
            <person name="Hayashi K."/>
            <person name="Sato H."/>
            <person name="Nagai K."/>
            <person name="Kimura K."/>
            <person name="Makita H."/>
            <person name="Sekine M."/>
            <person name="Obayashi M."/>
            <person name="Nishi T."/>
            <person name="Shibahara T."/>
            <person name="Tanaka T."/>
            <person name="Ishii S."/>
            <person name="Yamamoto J."/>
            <person name="Saito K."/>
            <person name="Kawai Y."/>
            <person name="Isono Y."/>
            <person name="Nakamura Y."/>
            <person name="Nagahari K."/>
            <person name="Murakami K."/>
            <person name="Yasuda T."/>
            <person name="Iwayanagi T."/>
            <person name="Wagatsuma M."/>
            <person name="Shiratori A."/>
            <person name="Sudo H."/>
            <person name="Hosoiri T."/>
            <person name="Kaku Y."/>
            <person name="Kodaira H."/>
            <person name="Kondo H."/>
            <person name="Sugawara M."/>
            <person name="Takahashi M."/>
            <person name="Kanda K."/>
            <person name="Yokoi T."/>
            <person name="Furuya T."/>
            <person name="Kikkawa E."/>
            <person name="Omura Y."/>
            <person name="Abe K."/>
            <person name="Kamihara K."/>
            <person name="Katsuta N."/>
            <person name="Sato K."/>
            <person name="Tanikawa M."/>
            <person name="Yamazaki M."/>
            <person name="Ninomiya K."/>
            <person name="Ishibashi T."/>
            <person name="Yamashita H."/>
            <person name="Murakawa K."/>
            <person name="Fujimori K."/>
            <person name="Tanai H."/>
            <person name="Kimata M."/>
            <person name="Watanabe M."/>
            <person name="Hiraoka S."/>
            <person name="Chiba Y."/>
            <person name="Ishida S."/>
            <person name="Ono Y."/>
            <person name="Takiguchi S."/>
            <person name="Watanabe S."/>
            <person name="Yosida M."/>
            <person name="Hotuta T."/>
            <person name="Kusano J."/>
            <person name="Kanehori K."/>
            <person name="Takahashi-Fujii A."/>
            <person name="Hara H."/>
            <person name="Tanase T.-O."/>
            <person name="Nomura Y."/>
            <person name="Togiya S."/>
            <person name="Komai F."/>
            <person name="Hara R."/>
            <person name="Takeuchi K."/>
            <person name="Arita M."/>
            <person name="Imose N."/>
            <person name="Musashino K."/>
            <person name="Yuuki H."/>
            <person name="Oshima A."/>
            <person name="Sasaki N."/>
            <person name="Aotsuka S."/>
            <person name="Yoshikawa Y."/>
            <person name="Matsunawa H."/>
            <person name="Ichihara T."/>
            <person name="Shiohata N."/>
            <person name="Sano S."/>
            <person name="Moriya S."/>
            <person name="Momiyama H."/>
            <person name="Satoh N."/>
            <person name="Takami S."/>
            <person name="Terashima Y."/>
            <person name="Suzuki O."/>
            <person name="Nakagawa S."/>
            <person name="Senoh A."/>
            <person name="Mizoguchi H."/>
            <person name="Goto Y."/>
            <person name="Shimizu F."/>
            <person name="Wakebe H."/>
            <person name="Hishigaki H."/>
            <person name="Watanabe T."/>
            <person name="Sugiyama A."/>
            <person name="Takemoto M."/>
            <person name="Kawakami B."/>
            <person name="Yamazaki M."/>
            <person name="Watanabe K."/>
            <person name="Kumagai A."/>
            <person name="Itakura S."/>
            <person name="Fukuzumi Y."/>
            <person name="Fujimori Y."/>
            <person name="Komiyama M."/>
            <person name="Tashiro H."/>
            <person name="Tanigami A."/>
            <person name="Fujiwara T."/>
            <person name="Ono T."/>
            <person name="Yamada K."/>
            <person name="Fujii Y."/>
            <person name="Ozaki K."/>
            <person name="Hirao M."/>
            <person name="Ohmori Y."/>
            <person name="Kawabata A."/>
            <person name="Hikiji T."/>
            <person name="Kobatake N."/>
            <person name="Inagaki H."/>
            <person name="Ikema Y."/>
            <person name="Okamoto S."/>
            <person name="Okitani R."/>
            <person name="Kawakami T."/>
            <person name="Noguchi S."/>
            <person name="Itoh T."/>
            <person name="Shigeta K."/>
            <person name="Senba T."/>
            <person name="Matsumura K."/>
            <person name="Nakajima Y."/>
            <person name="Mizuno T."/>
            <person name="Morinaga M."/>
            <person name="Sasaki M."/>
            <person name="Togashi T."/>
            <person name="Oyama M."/>
            <person name="Hata H."/>
            <person name="Watanabe M."/>
            <person name="Komatsu T."/>
            <person name="Mizushima-Sugano J."/>
            <person name="Satoh T."/>
            <person name="Shirai Y."/>
            <person name="Takahashi Y."/>
            <person name="Nakagawa K."/>
            <person name="Okumura K."/>
            <person name="Nagase T."/>
            <person name="Nomura N."/>
            <person name="Kikuchi H."/>
            <person name="Masuho Y."/>
            <person name="Yamashita R."/>
            <person name="Nakai K."/>
            <person name="Yada T."/>
            <person name="Nakamura Y."/>
            <person name="Ohara O."/>
            <person name="Isogai T."/>
            <person name="Sugano S."/>
        </authorList>
    </citation>
    <scope>NUCLEOTIDE SEQUENCE [LARGE SCALE MRNA] (ISOFORM 1)</scope>
    <source>
        <tissue>Placenta</tissue>
    </source>
</reference>
<reference key="4">
    <citation type="journal article" date="2006" name="Nature">
        <title>The DNA sequence and biological annotation of human chromosome 1.</title>
        <authorList>
            <person name="Gregory S.G."/>
            <person name="Barlow K.F."/>
            <person name="McLay K.E."/>
            <person name="Kaul R."/>
            <person name="Swarbreck D."/>
            <person name="Dunham A."/>
            <person name="Scott C.E."/>
            <person name="Howe K.L."/>
            <person name="Woodfine K."/>
            <person name="Spencer C.C.A."/>
            <person name="Jones M.C."/>
            <person name="Gillson C."/>
            <person name="Searle S."/>
            <person name="Zhou Y."/>
            <person name="Kokocinski F."/>
            <person name="McDonald L."/>
            <person name="Evans R."/>
            <person name="Phillips K."/>
            <person name="Atkinson A."/>
            <person name="Cooper R."/>
            <person name="Jones C."/>
            <person name="Hall R.E."/>
            <person name="Andrews T.D."/>
            <person name="Lloyd C."/>
            <person name="Ainscough R."/>
            <person name="Almeida J.P."/>
            <person name="Ambrose K.D."/>
            <person name="Anderson F."/>
            <person name="Andrew R.W."/>
            <person name="Ashwell R.I.S."/>
            <person name="Aubin K."/>
            <person name="Babbage A.K."/>
            <person name="Bagguley C.L."/>
            <person name="Bailey J."/>
            <person name="Beasley H."/>
            <person name="Bethel G."/>
            <person name="Bird C.P."/>
            <person name="Bray-Allen S."/>
            <person name="Brown J.Y."/>
            <person name="Brown A.J."/>
            <person name="Buckley D."/>
            <person name="Burton J."/>
            <person name="Bye J."/>
            <person name="Carder C."/>
            <person name="Chapman J.C."/>
            <person name="Clark S.Y."/>
            <person name="Clarke G."/>
            <person name="Clee C."/>
            <person name="Cobley V."/>
            <person name="Collier R.E."/>
            <person name="Corby N."/>
            <person name="Coville G.J."/>
            <person name="Davies J."/>
            <person name="Deadman R."/>
            <person name="Dunn M."/>
            <person name="Earthrowl M."/>
            <person name="Ellington A.G."/>
            <person name="Errington H."/>
            <person name="Frankish A."/>
            <person name="Frankland J."/>
            <person name="French L."/>
            <person name="Garner P."/>
            <person name="Garnett J."/>
            <person name="Gay L."/>
            <person name="Ghori M.R.J."/>
            <person name="Gibson R."/>
            <person name="Gilby L.M."/>
            <person name="Gillett W."/>
            <person name="Glithero R.J."/>
            <person name="Grafham D.V."/>
            <person name="Griffiths C."/>
            <person name="Griffiths-Jones S."/>
            <person name="Grocock R."/>
            <person name="Hammond S."/>
            <person name="Harrison E.S.I."/>
            <person name="Hart E."/>
            <person name="Haugen E."/>
            <person name="Heath P.D."/>
            <person name="Holmes S."/>
            <person name="Holt K."/>
            <person name="Howden P.J."/>
            <person name="Hunt A.R."/>
            <person name="Hunt S.E."/>
            <person name="Hunter G."/>
            <person name="Isherwood J."/>
            <person name="James R."/>
            <person name="Johnson C."/>
            <person name="Johnson D."/>
            <person name="Joy A."/>
            <person name="Kay M."/>
            <person name="Kershaw J.K."/>
            <person name="Kibukawa M."/>
            <person name="Kimberley A.M."/>
            <person name="King A."/>
            <person name="Knights A.J."/>
            <person name="Lad H."/>
            <person name="Laird G."/>
            <person name="Lawlor S."/>
            <person name="Leongamornlert D.A."/>
            <person name="Lloyd D.M."/>
            <person name="Loveland J."/>
            <person name="Lovell J."/>
            <person name="Lush M.J."/>
            <person name="Lyne R."/>
            <person name="Martin S."/>
            <person name="Mashreghi-Mohammadi M."/>
            <person name="Matthews L."/>
            <person name="Matthews N.S.W."/>
            <person name="McLaren S."/>
            <person name="Milne S."/>
            <person name="Mistry S."/>
            <person name="Moore M.J.F."/>
            <person name="Nickerson T."/>
            <person name="O'Dell C.N."/>
            <person name="Oliver K."/>
            <person name="Palmeiri A."/>
            <person name="Palmer S.A."/>
            <person name="Parker A."/>
            <person name="Patel D."/>
            <person name="Pearce A.V."/>
            <person name="Peck A.I."/>
            <person name="Pelan S."/>
            <person name="Phelps K."/>
            <person name="Phillimore B.J."/>
            <person name="Plumb R."/>
            <person name="Rajan J."/>
            <person name="Raymond C."/>
            <person name="Rouse G."/>
            <person name="Saenphimmachak C."/>
            <person name="Sehra H.K."/>
            <person name="Sheridan E."/>
            <person name="Shownkeen R."/>
            <person name="Sims S."/>
            <person name="Skuce C.D."/>
            <person name="Smith M."/>
            <person name="Steward C."/>
            <person name="Subramanian S."/>
            <person name="Sycamore N."/>
            <person name="Tracey A."/>
            <person name="Tromans A."/>
            <person name="Van Helmond Z."/>
            <person name="Wall M."/>
            <person name="Wallis J.M."/>
            <person name="White S."/>
            <person name="Whitehead S.L."/>
            <person name="Wilkinson J.E."/>
            <person name="Willey D.L."/>
            <person name="Williams H."/>
            <person name="Wilming L."/>
            <person name="Wray P.W."/>
            <person name="Wu Z."/>
            <person name="Coulson A."/>
            <person name="Vaudin M."/>
            <person name="Sulston J.E."/>
            <person name="Durbin R.M."/>
            <person name="Hubbard T."/>
            <person name="Wooster R."/>
            <person name="Dunham I."/>
            <person name="Carter N.P."/>
            <person name="McVean G."/>
            <person name="Ross M.T."/>
            <person name="Harrow J."/>
            <person name="Olson M.V."/>
            <person name="Beck S."/>
            <person name="Rogers J."/>
            <person name="Bentley D.R."/>
        </authorList>
    </citation>
    <scope>NUCLEOTIDE SEQUENCE [LARGE SCALE GENOMIC DNA]</scope>
</reference>
<reference key="5">
    <citation type="submission" date="2005-09" db="EMBL/GenBank/DDBJ databases">
        <authorList>
            <person name="Mural R.J."/>
            <person name="Istrail S."/>
            <person name="Sutton G.G."/>
            <person name="Florea L."/>
            <person name="Halpern A.L."/>
            <person name="Mobarry C.M."/>
            <person name="Lippert R."/>
            <person name="Walenz B."/>
            <person name="Shatkay H."/>
            <person name="Dew I."/>
            <person name="Miller J.R."/>
            <person name="Flanigan M.J."/>
            <person name="Edwards N.J."/>
            <person name="Bolanos R."/>
            <person name="Fasulo D."/>
            <person name="Halldorsson B.V."/>
            <person name="Hannenhalli S."/>
            <person name="Turner R."/>
            <person name="Yooseph S."/>
            <person name="Lu F."/>
            <person name="Nusskern D.R."/>
            <person name="Shue B.C."/>
            <person name="Zheng X.H."/>
            <person name="Zhong F."/>
            <person name="Delcher A.L."/>
            <person name="Huson D.H."/>
            <person name="Kravitz S.A."/>
            <person name="Mouchard L."/>
            <person name="Reinert K."/>
            <person name="Remington K.A."/>
            <person name="Clark A.G."/>
            <person name="Waterman M.S."/>
            <person name="Eichler E.E."/>
            <person name="Adams M.D."/>
            <person name="Hunkapiller M.W."/>
            <person name="Myers E.W."/>
            <person name="Venter J.C."/>
        </authorList>
    </citation>
    <scope>NUCLEOTIDE SEQUENCE [LARGE SCALE GENOMIC DNA]</scope>
</reference>
<reference key="6">
    <citation type="journal article" date="2004" name="Genome Res.">
        <title>The status, quality, and expansion of the NIH full-length cDNA project: the Mammalian Gene Collection (MGC).</title>
        <authorList>
            <consortium name="The MGC Project Team"/>
        </authorList>
    </citation>
    <scope>NUCLEOTIDE SEQUENCE [LARGE SCALE MRNA] (ISOFORM 2)</scope>
    <source>
        <tissue>Testis</tissue>
    </source>
</reference>
<reference key="7">
    <citation type="journal article" date="1996" name="DNA Res.">
        <title>Prediction of the coding sequences of unidentified human genes. VI. The coding sequences of 80 new genes (KIAA0201-KIAA0280) deduced by analysis of cDNA clones from cell line KG-1 and brain.</title>
        <authorList>
            <person name="Nagase T."/>
            <person name="Seki N."/>
            <person name="Ishikawa K."/>
            <person name="Ohira M."/>
            <person name="Kawarabayasi Y."/>
            <person name="Ohara O."/>
            <person name="Tanaka A."/>
            <person name="Kotani H."/>
            <person name="Miyajima N."/>
            <person name="Nomura N."/>
        </authorList>
    </citation>
    <scope>NUCLEOTIDE SEQUENCE [LARGE SCALE MRNA] OF 2-709 (ISOFORM 1)</scope>
    <source>
        <tissue>Bone marrow</tissue>
    </source>
</reference>
<reference key="8">
    <citation type="journal article" date="2001" name="Neuropathology">
        <title>Nicastrin, a key regulator of presenilin function, is expressed constitutively in human neural cell lines.</title>
        <authorList>
            <person name="Satoh J."/>
            <person name="Kuroda Y."/>
        </authorList>
    </citation>
    <scope>TISSUE SPECIFICITY</scope>
    <scope>INDUCTION</scope>
</reference>
<reference key="9">
    <citation type="journal article" date="2003" name="J. Proteome Res.">
        <title>Proteomic analysis of early melanosomes: identification of novel melanosomal proteins.</title>
        <authorList>
            <person name="Basrur V."/>
            <person name="Yang F."/>
            <person name="Kushimoto T."/>
            <person name="Higashimoto Y."/>
            <person name="Yasumoto K."/>
            <person name="Valencia J."/>
            <person name="Muller J."/>
            <person name="Vieira W.D."/>
            <person name="Watabe H."/>
            <person name="Shabanowitz J."/>
            <person name="Hearing V.J."/>
            <person name="Hunt D.F."/>
            <person name="Appella E."/>
        </authorList>
    </citation>
    <scope>SUBCELLULAR LOCATION [LARGE SCALE ANALYSIS]</scope>
    <source>
        <tissue>Melanoma</tissue>
    </source>
</reference>
<reference key="10">
    <citation type="journal article" date="2003" name="Proc. Natl. Acad. Sci. U.S.A.">
        <title>Gamma-secretase is a membrane protein complex comprised of presenilin, nicastrin, Aph-1, and Pen-2.</title>
        <authorList>
            <person name="Kimberly W.T."/>
            <person name="LaVoie M.J."/>
            <person name="Ostaszewski B.L."/>
            <person name="Ye W."/>
            <person name="Wolfe M.S."/>
            <person name="Selkoe D.J."/>
        </authorList>
    </citation>
    <scope>COMPONENT OF A GAMMA-SECRETASE COMPLEX WITH PEN2; PSEN1/PSEN2 AND APH1A</scope>
</reference>
<reference key="11">
    <citation type="journal article" date="2003" name="Nat. Cell Biol.">
        <title>Reconstitution of gamma-secretase activity.</title>
        <authorList>
            <person name="Edbauer D."/>
            <person name="Winkler E."/>
            <person name="Regula J.T."/>
            <person name="Pesold B."/>
            <person name="Steiner H."/>
            <person name="Haass C."/>
        </authorList>
    </citation>
    <scope>ENZYME ACTIVITY OF A GAMMA-SECRETASE COMPLEX</scope>
</reference>
<reference key="12">
    <citation type="journal article" date="2003" name="Nat. Biotechnol.">
        <title>Identification and quantification of N-linked glycoproteins using hydrazide chemistry, stable isotope labeling and mass spectrometry.</title>
        <authorList>
            <person name="Zhang H."/>
            <person name="Li X.-J."/>
            <person name="Martin D.B."/>
            <person name="Aebersold R."/>
        </authorList>
    </citation>
    <scope>GLYCOSYLATION AT ASN-387</scope>
</reference>
<reference key="13">
    <citation type="journal article" date="2006" name="J. Proteome Res.">
        <title>Proteomic and bioinformatic characterization of the biogenesis and function of melanosomes.</title>
        <authorList>
            <person name="Chi A."/>
            <person name="Valencia J.C."/>
            <person name="Hu Z.-Z."/>
            <person name="Watabe H."/>
            <person name="Yamaguchi H."/>
            <person name="Mangini N.J."/>
            <person name="Huang H."/>
            <person name="Canfield V.A."/>
            <person name="Cheng K.C."/>
            <person name="Yang F."/>
            <person name="Abe R."/>
            <person name="Yamagishi S."/>
            <person name="Shabanowitz J."/>
            <person name="Hearing V.J."/>
            <person name="Wu C."/>
            <person name="Appella E."/>
            <person name="Hunt D.F."/>
        </authorList>
    </citation>
    <scope>SUBCELLULAR LOCATION [LARGE SCALE ANALYSIS]</scope>
    <source>
        <tissue>Melanoma</tissue>
    </source>
</reference>
<reference key="14">
    <citation type="journal article" date="2009" name="J. Proteome Res.">
        <title>Glycoproteomics analysis of human liver tissue by combination of multiple enzyme digestion and hydrazide chemistry.</title>
        <authorList>
            <person name="Chen R."/>
            <person name="Jiang X."/>
            <person name="Sun D."/>
            <person name="Han G."/>
            <person name="Wang F."/>
            <person name="Ye M."/>
            <person name="Wang L."/>
            <person name="Zou H."/>
        </authorList>
    </citation>
    <scope>GLYCOSYLATION [LARGE SCALE ANALYSIS] AT ASN-45; ASN-187 AND ASN-387</scope>
    <source>
        <tissue>Liver</tissue>
    </source>
</reference>
<reference key="15">
    <citation type="journal article" date="2009" name="Nat. Biotechnol.">
        <title>Mass-spectrometric identification and relative quantification of N-linked cell surface glycoproteins.</title>
        <authorList>
            <person name="Wollscheid B."/>
            <person name="Bausch-Fluck D."/>
            <person name="Henderson C."/>
            <person name="O'Brien R."/>
            <person name="Bibel M."/>
            <person name="Schiess R."/>
            <person name="Aebersold R."/>
            <person name="Watts J.D."/>
        </authorList>
    </citation>
    <scope>GLYCOSYLATION [LARGE SCALE ANALYSIS] AT ASN-612</scope>
    <source>
        <tissue>Leukemic T-cell</tissue>
    </source>
</reference>
<reference key="16">
    <citation type="journal article" date="2011" name="BMC Syst. Biol.">
        <title>Initial characterization of the human central proteome.</title>
        <authorList>
            <person name="Burkard T.R."/>
            <person name="Planyavsky M."/>
            <person name="Kaupe I."/>
            <person name="Breitwieser F.P."/>
            <person name="Buerckstuemmer T."/>
            <person name="Bennett K.L."/>
            <person name="Superti-Furga G."/>
            <person name="Colinge J."/>
        </authorList>
    </citation>
    <scope>IDENTIFICATION BY MASS SPECTROMETRY [LARGE SCALE ANALYSIS]</scope>
</reference>
<reference key="17">
    <citation type="journal article" date="2015" name="Proteomics">
        <title>N-terminome analysis of the human mitochondrial proteome.</title>
        <authorList>
            <person name="Vaca Jacome A.S."/>
            <person name="Rabilloud T."/>
            <person name="Schaeffer-Reiss C."/>
            <person name="Rompais M."/>
            <person name="Ayoub D."/>
            <person name="Lane L."/>
            <person name="Bairoch A."/>
            <person name="Van Dorsselaer A."/>
            <person name="Carapito C."/>
        </authorList>
    </citation>
    <scope>IDENTIFICATION BY MASS SPECTROMETRY [LARGE SCALE ANALYSIS]</scope>
</reference>
<reference key="18">
    <citation type="journal article" date="2014" name="Nature">
        <title>Three-dimensional structure of human gamma-secretase.</title>
        <authorList>
            <person name="Lu P."/>
            <person name="Bai X.C."/>
            <person name="Ma D."/>
            <person name="Xie T."/>
            <person name="Yan C."/>
            <person name="Sun L."/>
            <person name="Yang G."/>
            <person name="Zhao Y."/>
            <person name="Zhou R."/>
            <person name="Scheres S.H."/>
            <person name="Shi Y."/>
        </authorList>
    </citation>
    <scope>STRUCTURE BY ELECTRON MICROSCOPY (5.40 ANGSTROMS)</scope>
    <scope>FUNCTION</scope>
    <scope>SUBCELLULAR LOCATION</scope>
    <scope>TOPOLOGY</scope>
    <scope>SUBUNIT</scope>
    <scope>DISULFIDE BONDS</scope>
    <scope>GLYCOSYLATION</scope>
</reference>
<reference key="19">
    <citation type="journal article" date="2015" name="Elife">
        <title>Sampling the conformational space of the catalytic subunit of human gamma-secretase.</title>
        <authorList>
            <person name="Bai X.C."/>
            <person name="Rajendra E."/>
            <person name="Yang G."/>
            <person name="Shi Y."/>
            <person name="Scheres S.H."/>
        </authorList>
    </citation>
    <scope>STRUCTURE BY ELECTRON MICROSCOPY (4.00 ANGSTROMS)</scope>
    <scope>DISULFIDE BONDS</scope>
    <scope>SUBCELLULAR LOCATION</scope>
    <scope>TOPOLOGY</scope>
    <scope>SUBUNIT</scope>
</reference>
<reference key="20">
    <citation type="journal article" date="2015" name="Nature">
        <title>An atomic structure of human gamma-secretase.</title>
        <authorList>
            <person name="Bai X.C."/>
            <person name="Yan C."/>
            <person name="Yang G."/>
            <person name="Lu P."/>
            <person name="Ma D."/>
            <person name="Sun L."/>
            <person name="Zhou R."/>
            <person name="Scheres S.H."/>
            <person name="Shi Y."/>
        </authorList>
    </citation>
    <scope>STRUCTURE BY ELECTRON MICROSCOPY (3.40 ANGSTROMS)</scope>
    <scope>FUNCTION</scope>
    <scope>SUBCELLULAR LOCATION</scope>
    <scope>TOPOLOGY</scope>
    <scope>SUBUNIT</scope>
    <scope>DISULFIDE BONDS</scope>
    <scope>GLYCOSYLATION AT ASN-45; ASN-55; ASN-187; ASN-264; ASN-387; ASN-435; ASN-464; ASN-506; ASN-530; ASN-562 AND ASN-573</scope>
</reference>
<reference key="21">
    <citation type="journal article" date="2015" name="Proc. Natl. Acad. Sci. U.S.A.">
        <title>Structural basis of human gamma-secretase assembly.</title>
        <authorList>
            <person name="Sun L."/>
            <person name="Zhao L."/>
            <person name="Yang G."/>
            <person name="Yan C."/>
            <person name="Zhou R."/>
            <person name="Zhou X."/>
            <person name="Xie T."/>
            <person name="Zhao Y."/>
            <person name="Wu S."/>
            <person name="Li X."/>
            <person name="Shi Y."/>
        </authorList>
    </citation>
    <scope>STRUCTURE BY ELECTRON MICROSCOPY (4.40 ANGSTROMS) OF 42-665</scope>
    <scope>DISULFIDE BONDS</scope>
    <scope>SUBCELLULAR LOCATION</scope>
    <scope>TOPOLOGY</scope>
    <scope>SUBUNIT</scope>
</reference>
<reference key="22">
    <citation type="journal article" date="2016" name="Sci. Rep.">
        <title>Structure of the transmembrane domain of human nicastrin-a component of gamma-secretase.</title>
        <authorList>
            <person name="Li Y."/>
            <person name="Liew L.S."/>
            <person name="Li Q."/>
            <person name="Kang C."/>
        </authorList>
    </citation>
    <scope>STRUCTURE BY NMR OF 664-709</scope>
    <scope>SUBCELLULAR LOCATION</scope>
</reference>
<reference evidence="33" key="23">
    <citation type="journal article" date="2019" name="Nature">
        <title>Structural basis of Notch recognition by human gamma-secretase.</title>
        <authorList>
            <person name="Yang G."/>
            <person name="Zhou R."/>
            <person name="Zhou Q."/>
            <person name="Guo X."/>
            <person name="Yan C."/>
            <person name="Ke M."/>
            <person name="Lei J."/>
            <person name="Shi Y."/>
        </authorList>
    </citation>
    <scope>STRUCTURE BY ELECTRON MICROSCOPY (2.70 ANGSTROMS) IN COMPLEX WITH NOTCH1; PSENEN; APH1A AND PSEN1</scope>
    <scope>FUNCTION</scope>
    <scope>SUBUNIT</scope>
    <scope>TOPOLOGY</scope>
    <scope>GLYCOSYLATION AT ASN-45; ASN-55; ASN-187; ASN-264; ASN-387; ASN-435; ASN-464; ASN-506; ASN-530; ASN-562 AND ASN-573</scope>
    <scope>DISULFIDE BOND</scope>
    <scope>MUTAGENESIS OF TRP-653</scope>
</reference>
<reference evidence="34" key="24">
    <citation type="journal article" date="2019" name="Science">
        <title>Recognition of the amyloid precursor protein by human gamma-secretase.</title>
        <authorList>
            <person name="Zhou R."/>
            <person name="Yang G."/>
            <person name="Guo X."/>
            <person name="Zhou Q."/>
            <person name="Lei J."/>
            <person name="Shi Y."/>
        </authorList>
    </citation>
    <scope>STRUCTURE BY ELECTRON MICROSCOPY (2.60 ANGSTROMS) IN COMPLEX WITH APP CHAIN C83; PSENEN; APH1A AND PSEN1</scope>
    <scope>FUNCTION</scope>
    <scope>SUBUNIT</scope>
    <scope>TOPOLOGY</scope>
    <scope>GLYCOSYLATION AT ASN-45; ASN-55; ASN-187; ASN-264; ASN-387; ASN-435; ASN-464; ASN-506; ASN-530; ASN-562; ASN-573 AND ASN-580</scope>
    <scope>DISULFIDE BOND</scope>
</reference>
<reference key="25">
    <citation type="journal article" date="2010" name="Science">
        <title>Gamma-secretase gene mutations in familial acne inversa.</title>
        <authorList>
            <person name="Wang B."/>
            <person name="Yang W."/>
            <person name="Wen W."/>
            <person name="Sun J."/>
            <person name="Su B."/>
            <person name="Liu B."/>
            <person name="Ma D."/>
            <person name="Lv D."/>
            <person name="Wen Y."/>
            <person name="Qu T."/>
            <person name="Chen M."/>
            <person name="Sun M."/>
            <person name="Shen Y."/>
            <person name="Zhang X."/>
        </authorList>
    </citation>
    <scope>INVOLVEMENT IN ACNINV1</scope>
</reference>
<reference key="26">
    <citation type="journal article" date="2011" name="J. Invest. Dermatol.">
        <title>Confirmation by exome sequencing of the pathogenic role of NCSTN mutations in acne inversa (hidradenitis suppurativa).</title>
        <authorList>
            <person name="Liu Y."/>
            <person name="Gao M."/>
            <person name="Lv Y.M."/>
            <person name="Yang X."/>
            <person name="Ren Y.Q."/>
            <person name="Jiang T."/>
            <person name="Zhang X."/>
            <person name="Guo B.R."/>
            <person name="Li M."/>
            <person name="Zhang Q."/>
            <person name="Zhang P."/>
            <person name="Zhou F.S."/>
            <person name="Chen G."/>
            <person name="Yin X.Y."/>
            <person name="Zuo X.B."/>
            <person name="Sun L.D."/>
            <person name="Zheng X.D."/>
            <person name="Zhang S.M."/>
            <person name="Liu J.J."/>
            <person name="Zhou Y."/>
            <person name="Li Y.R."/>
            <person name="Wang J."/>
            <person name="Wang J."/>
            <person name="Yang H.M."/>
            <person name="Yang S."/>
            <person name="Li R.Q."/>
            <person name="Zhang X.J."/>
        </authorList>
    </citation>
    <scope>INVOLVEMENT IN ACNINV1</scope>
</reference>
<reference key="27">
    <citation type="journal article" date="2011" name="Br. J. Dermatol.">
        <title>Two novel mutations of the nicastrin gene in Chinese patients with acne inversa.</title>
        <authorList>
            <person name="Li C.R."/>
            <person name="Jiang M.J."/>
            <person name="Shen D.B."/>
            <person name="Xu H.X."/>
            <person name="Wang H.S."/>
            <person name="Yao X."/>
            <person name="Zhang Y."/>
            <person name="Zhou W.Q."/>
            <person name="Wang B."/>
        </authorList>
    </citation>
    <scope>VARIANT ACNINV1 ARG-211</scope>
</reference>
<protein>
    <recommendedName>
        <fullName>Nicastrin</fullName>
    </recommendedName>
</protein>
<evidence type="ECO:0000255" key="1"/>
<evidence type="ECO:0000269" key="2">
    <source>
    </source>
</evidence>
<evidence type="ECO:0000269" key="3">
    <source>
    </source>
</evidence>
<evidence type="ECO:0000269" key="4">
    <source>
    </source>
</evidence>
<evidence type="ECO:0000269" key="5">
    <source>
    </source>
</evidence>
<evidence type="ECO:0000269" key="6">
    <source>
    </source>
</evidence>
<evidence type="ECO:0000269" key="7">
    <source>
    </source>
</evidence>
<evidence type="ECO:0000269" key="8">
    <source>
    </source>
</evidence>
<evidence type="ECO:0000269" key="9">
    <source>
    </source>
</evidence>
<evidence type="ECO:0000269" key="10">
    <source>
    </source>
</evidence>
<evidence type="ECO:0000269" key="11">
    <source>
    </source>
</evidence>
<evidence type="ECO:0000269" key="12">
    <source>
    </source>
</evidence>
<evidence type="ECO:0000269" key="13">
    <source>
    </source>
</evidence>
<evidence type="ECO:0000269" key="14">
    <source>
    </source>
</evidence>
<evidence type="ECO:0000269" key="15">
    <source>
    </source>
</evidence>
<evidence type="ECO:0000269" key="16">
    <source>
    </source>
</evidence>
<evidence type="ECO:0000269" key="17">
    <source>
    </source>
</evidence>
<evidence type="ECO:0000269" key="18">
    <source>
    </source>
</evidence>
<evidence type="ECO:0000269" key="19">
    <source>
    </source>
</evidence>
<evidence type="ECO:0000269" key="20">
    <source>
    </source>
</evidence>
<evidence type="ECO:0000303" key="21">
    <source>
    </source>
</evidence>
<evidence type="ECO:0000305" key="22"/>
<evidence type="ECO:0000305" key="23">
    <source>
    </source>
</evidence>
<evidence type="ECO:0000305" key="24">
    <source>
    </source>
</evidence>
<evidence type="ECO:0000305" key="25">
    <source>
    </source>
</evidence>
<evidence type="ECO:0000305" key="26">
    <source>
    </source>
</evidence>
<evidence type="ECO:0007744" key="27">
    <source>
        <dbReference type="PDB" id="4UIS"/>
    </source>
</evidence>
<evidence type="ECO:0007744" key="28">
    <source>
        <dbReference type="PDB" id="5A63"/>
    </source>
</evidence>
<evidence type="ECO:0007744" key="29">
    <source>
        <dbReference type="PDB" id="5FN2"/>
    </source>
</evidence>
<evidence type="ECO:0007744" key="30">
    <source>
        <dbReference type="PDB" id="5FN3"/>
    </source>
</evidence>
<evidence type="ECO:0007744" key="31">
    <source>
        <dbReference type="PDB" id="5FN4"/>
    </source>
</evidence>
<evidence type="ECO:0007744" key="32">
    <source>
        <dbReference type="PDB" id="5FN5"/>
    </source>
</evidence>
<evidence type="ECO:0007744" key="33">
    <source>
        <dbReference type="PDB" id="6IDF"/>
    </source>
</evidence>
<evidence type="ECO:0007744" key="34">
    <source>
        <dbReference type="PDB" id="6IYC"/>
    </source>
</evidence>
<evidence type="ECO:0007829" key="35">
    <source>
        <dbReference type="PDB" id="2N7Q"/>
    </source>
</evidence>
<evidence type="ECO:0007829" key="36">
    <source>
        <dbReference type="PDB" id="2N7R"/>
    </source>
</evidence>
<evidence type="ECO:0007829" key="37">
    <source>
        <dbReference type="PDB" id="5A63"/>
    </source>
</evidence>
<evidence type="ECO:0007829" key="38">
    <source>
        <dbReference type="PDB" id="6IDF"/>
    </source>
</evidence>
<evidence type="ECO:0007829" key="39">
    <source>
        <dbReference type="PDB" id="6IYC"/>
    </source>
</evidence>
<evidence type="ECO:0007829" key="40">
    <source>
        <dbReference type="PDB" id="7D8X"/>
    </source>
</evidence>
<evidence type="ECO:0007829" key="41">
    <source>
        <dbReference type="PDB" id="7Y5X"/>
    </source>
</evidence>
<evidence type="ECO:0007829" key="42">
    <source>
        <dbReference type="PDB" id="8KCO"/>
    </source>
</evidence>
<evidence type="ECO:0007829" key="43">
    <source>
        <dbReference type="PDB" id="8KCS"/>
    </source>
</evidence>
<evidence type="ECO:0007829" key="44">
    <source>
        <dbReference type="PDB" id="8KCT"/>
    </source>
</evidence>
<evidence type="ECO:0007829" key="45">
    <source>
        <dbReference type="PDB" id="8OQY"/>
    </source>
</evidence>
<evidence type="ECO:0007829" key="46">
    <source>
        <dbReference type="PDB" id="8OQZ"/>
    </source>
</evidence>
<comment type="function">
    <text evidence="2 5 14 16 19 20">Essential subunit of the gamma-secretase complex, an endoprotease complex that catalyzes the intramembrane cleavage of integral membrane proteins such as Notch receptors and APP (amyloid-beta precursor protein) (PubMed:10993067, PubMed:12679784, PubMed:25043039, PubMed:26280335, PubMed:30598546, PubMed:30630874). The gamma-secretase complex plays a role in Notch and Wnt signaling cascades and regulation of downstream processes via its role in processing key regulatory proteins, and by regulating cytosolic CTNNB1 levels.</text>
</comment>
<comment type="subunit">
    <text evidence="2 6 14 15 16 17 19 20">Component of the gamma-secretase complex (PubMed:10993067, PubMed:30598546, PubMed:30630874). The functional gamma-secretase complex is composed of at least four polypeptides: a presenilin homodimer (PSEN1 or PSEN2), nicastrin (NCSTN), APH1 (APH1A or APH1B) and PSENEN/PEN2 (PubMed:12740439, PubMed:25043039, PubMed:25918421, PubMed:26280335, PubMed:26623517, PubMed:30598546, PubMed:30630874). Binds to proteolytic processed C-terminal fragments C83 and C99 of the amyloid precursor protein (APP) (PubMed:10993067, PubMed:30630874). Interacts with PSEN1 and PSEN2 (PubMed:10993067).</text>
</comment>
<comment type="interaction">
    <interactant intactId="EBI-998440">
        <id>Q92542</id>
    </interactant>
    <interactant intactId="EBI-2606935">
        <id>Q96BI3</id>
        <label>APH1A</label>
    </interactant>
    <organismsDiffer>false</organismsDiffer>
    <experiments>4</experiments>
</comment>
<comment type="interaction">
    <interactant intactId="EBI-998440">
        <id>Q92542</id>
    </interactant>
    <interactant intactId="EBI-750709">
        <id>P35613</id>
        <label>BSG</label>
    </interactant>
    <organismsDiffer>false</organismsDiffer>
    <experiments>6</experiments>
</comment>
<comment type="interaction">
    <interactant intactId="EBI-998440">
        <id>Q92542</id>
    </interactant>
    <interactant intactId="EBI-297277">
        <id>P49768</id>
        <label>PSEN1</label>
    </interactant>
    <organismsDiffer>false</organismsDiffer>
    <experiments>6</experiments>
</comment>
<comment type="interaction">
    <interactant intactId="EBI-998440">
        <id>Q92542</id>
    </interactant>
    <interactant intactId="EBI-2606356">
        <id>PRO_0000025592</id>
        <label>PSEN1</label>
        <dbReference type="UniProtKB" id="P49768"/>
    </interactant>
    <organismsDiffer>false</organismsDiffer>
    <experiments>2</experiments>
</comment>
<comment type="interaction">
    <interactant intactId="EBI-998440">
        <id>Q92542</id>
    </interactant>
    <interactant intactId="EBI-998468">
        <id>Q9NZ42</id>
        <label>PSENEN</label>
    </interactant>
    <organismsDiffer>false</organismsDiffer>
    <experiments>4</experiments>
</comment>
<comment type="interaction">
    <interactant intactId="EBI-998440">
        <id>Q92542</id>
    </interactant>
    <interactant intactId="EBI-998422">
        <id>P49755</id>
        <label>TMED10</label>
    </interactant>
    <organismsDiffer>false</organismsDiffer>
    <experiments>5</experiments>
</comment>
<comment type="subcellular location">
    <subcellularLocation>
        <location evidence="2 14 15 16 17 18">Membrane</location>
        <topology evidence="14 15 16 17 19 20">Single-pass type I membrane protein</topology>
    </subcellularLocation>
    <subcellularLocation>
        <location evidence="2">Cytoplasmic vesicle membrane</location>
        <topology evidence="14 15 16 17 19 20">Single-pass type I membrane protein</topology>
    </subcellularLocation>
    <subcellularLocation>
        <location evidence="4 8">Melanosome</location>
    </subcellularLocation>
    <text>Identified by mass spectrometry in melanosome fractions from stage I to stage IV.</text>
</comment>
<comment type="alternative products">
    <event type="alternative splicing"/>
    <isoform>
        <id>Q92542-1</id>
        <name>1</name>
        <sequence type="displayed"/>
    </isoform>
    <isoform>
        <id>Q92542-2</id>
        <name>2</name>
        <sequence type="described" ref="VSP_008385 VSP_008386"/>
    </isoform>
</comment>
<comment type="tissue specificity">
    <text evidence="2 3">Detected in brain (at protein level) (PubMed:10993067). Widely expressed (PubMed:11396676).</text>
</comment>
<comment type="induction">
    <text evidence="3">Constitutively expressed in neural cells.</text>
</comment>
<comment type="PTM">
    <text evidence="2 14 16 19 20">N-glycosylated.</text>
</comment>
<comment type="disease" evidence="11 12 13">
    <disease id="DI-02995">
        <name>Acne inversa, familial, 1</name>
        <acronym>ACNINV1</acronym>
        <description>A chronic relapsing inflammatory disease of the hair follicles characterized by recurrent draining sinuses, painful skin abscesses, and disfiguring scars. Manifestations typically appear after puberty.</description>
        <dbReference type="MIM" id="142690"/>
    </disease>
    <text>The disease is caused by variants affecting the gene represented in this entry.</text>
</comment>
<comment type="similarity">
    <text evidence="22">Belongs to the nicastrin family.</text>
</comment>
<dbReference type="EMBL" id="AF240468">
    <property type="protein sequence ID" value="AAG11412.1"/>
    <property type="molecule type" value="mRNA"/>
</dbReference>
<dbReference type="EMBL" id="AY359120">
    <property type="protein sequence ID" value="AAQ89478.1"/>
    <property type="molecule type" value="mRNA"/>
</dbReference>
<dbReference type="EMBL" id="AK314764">
    <property type="protein sequence ID" value="BAG37302.1"/>
    <property type="molecule type" value="mRNA"/>
</dbReference>
<dbReference type="EMBL" id="AL445230">
    <property type="status" value="NOT_ANNOTATED_CDS"/>
    <property type="molecule type" value="Genomic_DNA"/>
</dbReference>
<dbReference type="EMBL" id="CH471121">
    <property type="protein sequence ID" value="EAW52720.1"/>
    <property type="molecule type" value="Genomic_DNA"/>
</dbReference>
<dbReference type="EMBL" id="CH471121">
    <property type="protein sequence ID" value="EAW52721.1"/>
    <property type="molecule type" value="Genomic_DNA"/>
</dbReference>
<dbReference type="EMBL" id="CH471121">
    <property type="protein sequence ID" value="EAW52722.1"/>
    <property type="molecule type" value="Genomic_DNA"/>
</dbReference>
<dbReference type="EMBL" id="BC047621">
    <property type="protein sequence ID" value="AAH47621.1"/>
    <property type="molecule type" value="mRNA"/>
</dbReference>
<dbReference type="EMBL" id="D87442">
    <property type="protein sequence ID" value="BAA13383.1"/>
    <property type="molecule type" value="mRNA"/>
</dbReference>
<dbReference type="CCDS" id="CCDS1203.1">
    <molecule id="Q92542-1"/>
</dbReference>
<dbReference type="RefSeq" id="NP_001277113.1">
    <molecule id="Q92542-2"/>
    <property type="nucleotide sequence ID" value="NM_001290184.2"/>
</dbReference>
<dbReference type="RefSeq" id="NP_001277115.1">
    <property type="nucleotide sequence ID" value="NM_001290186.1"/>
</dbReference>
<dbReference type="RefSeq" id="NP_056146.1">
    <molecule id="Q92542-1"/>
    <property type="nucleotide sequence ID" value="NM_015331.3"/>
</dbReference>
<dbReference type="PDB" id="2N7Q">
    <property type="method" value="NMR"/>
    <property type="chains" value="A=664-709"/>
</dbReference>
<dbReference type="PDB" id="2N7R">
    <property type="method" value="NMR"/>
    <property type="chains" value="A=664-709"/>
</dbReference>
<dbReference type="PDB" id="4UIS">
    <property type="method" value="EM"/>
    <property type="resolution" value="4.40 A"/>
    <property type="chains" value="A=42-665"/>
</dbReference>
<dbReference type="PDB" id="5A63">
    <property type="method" value="EM"/>
    <property type="resolution" value="3.40 A"/>
    <property type="chains" value="A=1-709"/>
</dbReference>
<dbReference type="PDB" id="5FN2">
    <property type="method" value="EM"/>
    <property type="resolution" value="4.20 A"/>
    <property type="chains" value="A=1-709"/>
</dbReference>
<dbReference type="PDB" id="5FN3">
    <property type="method" value="EM"/>
    <property type="resolution" value="4.10 A"/>
    <property type="chains" value="A=1-709"/>
</dbReference>
<dbReference type="PDB" id="5FN4">
    <property type="method" value="EM"/>
    <property type="resolution" value="4.00 A"/>
    <property type="chains" value="A=1-709"/>
</dbReference>
<dbReference type="PDB" id="5FN5">
    <property type="method" value="EM"/>
    <property type="resolution" value="4.30 A"/>
    <property type="chains" value="A=1-709"/>
</dbReference>
<dbReference type="PDB" id="6IDF">
    <property type="method" value="EM"/>
    <property type="resolution" value="2.70 A"/>
    <property type="chains" value="A=1-709"/>
</dbReference>
<dbReference type="PDB" id="6IYC">
    <property type="method" value="EM"/>
    <property type="resolution" value="2.60 A"/>
    <property type="chains" value="A=1-709"/>
</dbReference>
<dbReference type="PDB" id="6LQG">
    <property type="method" value="EM"/>
    <property type="resolution" value="3.10 A"/>
    <property type="chains" value="A=1-709"/>
</dbReference>
<dbReference type="PDB" id="6LR4">
    <property type="method" value="EM"/>
    <property type="resolution" value="3.00 A"/>
    <property type="chains" value="A=1-709"/>
</dbReference>
<dbReference type="PDB" id="7C9I">
    <property type="method" value="EM"/>
    <property type="resolution" value="3.10 A"/>
    <property type="chains" value="A=1-709"/>
</dbReference>
<dbReference type="PDB" id="7D8X">
    <property type="method" value="EM"/>
    <property type="resolution" value="2.60 A"/>
    <property type="chains" value="A=1-709"/>
</dbReference>
<dbReference type="PDB" id="7Y5T">
    <property type="method" value="EM"/>
    <property type="resolution" value="2.90 A"/>
    <property type="chains" value="A=1-709"/>
</dbReference>
<dbReference type="PDB" id="7Y5X">
    <property type="method" value="EM"/>
    <property type="resolution" value="3.00 A"/>
    <property type="chains" value="A=1-709"/>
</dbReference>
<dbReference type="PDB" id="7Y5Z">
    <property type="method" value="EM"/>
    <property type="resolution" value="3.40 A"/>
    <property type="chains" value="A=1-709"/>
</dbReference>
<dbReference type="PDB" id="8IM7">
    <property type="method" value="EM"/>
    <property type="resolution" value="3.40 A"/>
    <property type="chains" value="A=1-709"/>
</dbReference>
<dbReference type="PDB" id="8K8E">
    <property type="method" value="EM"/>
    <property type="resolution" value="2.60 A"/>
    <property type="chains" value="A=1-709"/>
</dbReference>
<dbReference type="PDB" id="8KCO">
    <property type="method" value="EM"/>
    <property type="resolution" value="2.80 A"/>
    <property type="chains" value="A=1-701"/>
</dbReference>
<dbReference type="PDB" id="8KCP">
    <property type="method" value="EM"/>
    <property type="resolution" value="3.00 A"/>
    <property type="chains" value="A=1-701"/>
</dbReference>
<dbReference type="PDB" id="8KCS">
    <property type="method" value="EM"/>
    <property type="resolution" value="2.40 A"/>
    <property type="chains" value="A=1-701"/>
</dbReference>
<dbReference type="PDB" id="8KCT">
    <property type="method" value="EM"/>
    <property type="resolution" value="2.60 A"/>
    <property type="chains" value="A=1-701"/>
</dbReference>
<dbReference type="PDB" id="8KCU">
    <property type="method" value="EM"/>
    <property type="resolution" value="2.70 A"/>
    <property type="chains" value="A=1-701"/>
</dbReference>
<dbReference type="PDB" id="8OQY">
    <property type="method" value="EM"/>
    <property type="resolution" value="3.30 A"/>
    <property type="chains" value="A=1-709"/>
</dbReference>
<dbReference type="PDB" id="8OQZ">
    <property type="method" value="EM"/>
    <property type="resolution" value="3.40 A"/>
    <property type="chains" value="A=1-709"/>
</dbReference>
<dbReference type="PDB" id="8X52">
    <property type="method" value="EM"/>
    <property type="resolution" value="2.90 A"/>
    <property type="chains" value="A=1-709"/>
</dbReference>
<dbReference type="PDB" id="8X53">
    <property type="method" value="EM"/>
    <property type="resolution" value="3.00 A"/>
    <property type="chains" value="A=1-709"/>
</dbReference>
<dbReference type="PDB" id="8X54">
    <property type="method" value="EM"/>
    <property type="resolution" value="2.90 A"/>
    <property type="chains" value="A=1-709"/>
</dbReference>
<dbReference type="PDBsum" id="2N7Q"/>
<dbReference type="PDBsum" id="2N7R"/>
<dbReference type="PDBsum" id="4UIS"/>
<dbReference type="PDBsum" id="5A63"/>
<dbReference type="PDBsum" id="5FN2"/>
<dbReference type="PDBsum" id="5FN3"/>
<dbReference type="PDBsum" id="5FN4"/>
<dbReference type="PDBsum" id="5FN5"/>
<dbReference type="PDBsum" id="6IDF"/>
<dbReference type="PDBsum" id="6IYC"/>
<dbReference type="PDBsum" id="6LQG"/>
<dbReference type="PDBsum" id="6LR4"/>
<dbReference type="PDBsum" id="7C9I"/>
<dbReference type="PDBsum" id="7D8X"/>
<dbReference type="PDBsum" id="7Y5T"/>
<dbReference type="PDBsum" id="7Y5X"/>
<dbReference type="PDBsum" id="7Y5Z"/>
<dbReference type="PDBsum" id="8IM7"/>
<dbReference type="PDBsum" id="8K8E"/>
<dbReference type="PDBsum" id="8KCO"/>
<dbReference type="PDBsum" id="8KCP"/>
<dbReference type="PDBsum" id="8KCS"/>
<dbReference type="PDBsum" id="8KCT"/>
<dbReference type="PDBsum" id="8KCU"/>
<dbReference type="PDBsum" id="8OQY"/>
<dbReference type="PDBsum" id="8OQZ"/>
<dbReference type="PDBsum" id="8X52"/>
<dbReference type="PDBsum" id="8X53"/>
<dbReference type="PDBsum" id="8X54"/>
<dbReference type="EMDB" id="EMD-0944"/>
<dbReference type="EMDB" id="EMD-0957"/>
<dbReference type="EMDB" id="EMD-17112"/>
<dbReference type="EMDB" id="EMD-17113"/>
<dbReference type="EMDB" id="EMD-2477"/>
<dbReference type="EMDB" id="EMD-2478"/>
<dbReference type="EMDB" id="EMD-30312"/>
<dbReference type="EMDB" id="EMD-30614"/>
<dbReference type="EMDB" id="EMD-33624"/>
<dbReference type="EMDB" id="EMD-33628"/>
<dbReference type="EMDB" id="EMD-33629"/>
<dbReference type="EMDB" id="EMD-35572"/>
<dbReference type="EMDB" id="EMD-36948"/>
<dbReference type="EMDB" id="EMD-37106"/>
<dbReference type="EMDB" id="EMD-37107"/>
<dbReference type="EMDB" id="EMD-37108"/>
<dbReference type="EMDB" id="EMD-37109"/>
<dbReference type="EMDB" id="EMD-37110"/>
<dbReference type="EMDB" id="EMD-38059"/>
<dbReference type="EMDB" id="EMD-38060"/>
<dbReference type="EMDB" id="EMD-38061"/>
<dbReference type="EMDB" id="EMD-9648"/>
<dbReference type="EMDB" id="EMD-9751"/>
<dbReference type="SMR" id="Q92542"/>
<dbReference type="BioGRID" id="116961">
    <property type="interactions" value="190"/>
</dbReference>
<dbReference type="ComplexPortal" id="CPX-2176">
    <property type="entry name" value="Gamma-secretase complex, APH1A-PSEN1 variant"/>
</dbReference>
<dbReference type="ComplexPortal" id="CPX-4231">
    <property type="entry name" value="Gamma-secretase complex, APH1A-PSEN2 variant"/>
</dbReference>
<dbReference type="ComplexPortal" id="CPX-4232">
    <property type="entry name" value="Gamma-secretase complex, APH1B-PSEN2 variant"/>
</dbReference>
<dbReference type="ComplexPortal" id="CPX-4233">
    <property type="entry name" value="Gamma-secretase complex, APH1B-PSEN1 variant"/>
</dbReference>
<dbReference type="CORUM" id="Q92542"/>
<dbReference type="DIP" id="DIP-36336N"/>
<dbReference type="FunCoup" id="Q92542">
    <property type="interactions" value="2405"/>
</dbReference>
<dbReference type="IntAct" id="Q92542">
    <property type="interactions" value="106"/>
</dbReference>
<dbReference type="MINT" id="Q92542"/>
<dbReference type="STRING" id="9606.ENSP00000294785"/>
<dbReference type="BindingDB" id="Q92542"/>
<dbReference type="ChEMBL" id="CHEMBL3418"/>
<dbReference type="DrugBank" id="DB11893">
    <property type="generic name" value="Avagacestat"/>
</dbReference>
<dbReference type="DrugBank" id="DB12263">
    <property type="generic name" value="Begacestat"/>
</dbReference>
<dbReference type="DrugBank" id="DB05171">
    <property type="generic name" value="E-2012"/>
</dbReference>
<dbReference type="DrugBank" id="DB16159">
    <property type="generic name" value="Esflurbiprofen"/>
</dbReference>
<dbReference type="DrugBank" id="DB12819">
    <property type="generic name" value="GSI-136"/>
</dbReference>
<dbReference type="DrugBank" id="DB16825">
    <property type="generic name" value="Itanapraced"/>
</dbReference>
<dbReference type="DrugBank" id="DB12852">
    <property type="generic name" value="MK-0752"/>
</dbReference>
<dbReference type="DrugBank" id="DB12005">
    <property type="generic name" value="Nirogacestat"/>
</dbReference>
<dbReference type="DrugBank" id="DB11870">
    <property type="generic name" value="RG-4733"/>
</dbReference>
<dbReference type="DrugBank" id="DB12463">
    <property type="generic name" value="Semagacestat"/>
</dbReference>
<dbReference type="DrugBank" id="DB05289">
    <property type="generic name" value="Tarenflurbil"/>
</dbReference>
<dbReference type="GlyConnect" id="1567">
    <property type="glycosylation" value="6 N-Linked glycans (7 sites)"/>
</dbReference>
<dbReference type="GlyCosmos" id="Q92542">
    <property type="glycosylation" value="17 sites, 6 glycans"/>
</dbReference>
<dbReference type="GlyGen" id="Q92542">
    <property type="glycosylation" value="28 sites, 30 N-linked glycans (13 sites), 1 O-linked glycan (9 sites)"/>
</dbReference>
<dbReference type="iPTMnet" id="Q92542"/>
<dbReference type="PhosphoSitePlus" id="Q92542"/>
<dbReference type="SwissPalm" id="Q92542"/>
<dbReference type="BioMuta" id="NCSTN"/>
<dbReference type="DMDM" id="12231037"/>
<dbReference type="jPOST" id="Q92542"/>
<dbReference type="MassIVE" id="Q92542"/>
<dbReference type="PaxDb" id="9606-ENSP00000294785"/>
<dbReference type="PeptideAtlas" id="Q92542"/>
<dbReference type="ProteomicsDB" id="75302">
    <molecule id="Q92542-1"/>
</dbReference>
<dbReference type="ProteomicsDB" id="75303">
    <molecule id="Q92542-2"/>
</dbReference>
<dbReference type="Pumba" id="Q92542"/>
<dbReference type="TopDownProteomics" id="Q92542-2">
    <molecule id="Q92542-2"/>
</dbReference>
<dbReference type="Antibodypedia" id="20490">
    <property type="antibodies" value="536 antibodies from 45 providers"/>
</dbReference>
<dbReference type="DNASU" id="23385"/>
<dbReference type="Ensembl" id="ENST00000294785.10">
    <molecule id="Q92542-1"/>
    <property type="protein sequence ID" value="ENSP00000294785.5"/>
    <property type="gene ID" value="ENSG00000162736.18"/>
</dbReference>
<dbReference type="GeneID" id="23385"/>
<dbReference type="KEGG" id="hsa:23385"/>
<dbReference type="MANE-Select" id="ENST00000294785.10">
    <property type="protein sequence ID" value="ENSP00000294785.5"/>
    <property type="RefSeq nucleotide sequence ID" value="NM_015331.3"/>
    <property type="RefSeq protein sequence ID" value="NP_056146.1"/>
</dbReference>
<dbReference type="UCSC" id="uc001fvx.4">
    <molecule id="Q92542-1"/>
    <property type="organism name" value="human"/>
</dbReference>
<dbReference type="AGR" id="HGNC:17091"/>
<dbReference type="CTD" id="23385"/>
<dbReference type="DisGeNET" id="23385"/>
<dbReference type="GeneCards" id="NCSTN"/>
<dbReference type="HGNC" id="HGNC:17091">
    <property type="gene designation" value="NCSTN"/>
</dbReference>
<dbReference type="HPA" id="ENSG00000162736">
    <property type="expression patterns" value="Low tissue specificity"/>
</dbReference>
<dbReference type="MalaCards" id="NCSTN"/>
<dbReference type="MIM" id="142690">
    <property type="type" value="phenotype"/>
</dbReference>
<dbReference type="MIM" id="605254">
    <property type="type" value="gene"/>
</dbReference>
<dbReference type="neXtProt" id="NX_Q92542"/>
<dbReference type="OpenTargets" id="ENSG00000162736"/>
<dbReference type="Orphanet" id="289478">
    <property type="disease" value="PASH syndrome"/>
</dbReference>
<dbReference type="PharmGKB" id="PA142671271"/>
<dbReference type="VEuPathDB" id="HostDB:ENSG00000162736"/>
<dbReference type="eggNOG" id="KOG2657">
    <property type="taxonomic scope" value="Eukaryota"/>
</dbReference>
<dbReference type="GeneTree" id="ENSGT00390000014633"/>
<dbReference type="HOGENOM" id="CLU_024257_0_0_1"/>
<dbReference type="InParanoid" id="Q92542"/>
<dbReference type="OMA" id="ECVYPGV"/>
<dbReference type="OrthoDB" id="755951at2759"/>
<dbReference type="PAN-GO" id="Q92542">
    <property type="GO annotations" value="3 GO annotations based on evolutionary models"/>
</dbReference>
<dbReference type="PhylomeDB" id="Q92542"/>
<dbReference type="TreeFam" id="TF317086"/>
<dbReference type="PathwayCommons" id="Q92542"/>
<dbReference type="Reactome" id="R-HSA-1251985">
    <property type="pathway name" value="Nuclear signaling by ERBB4"/>
</dbReference>
<dbReference type="Reactome" id="R-HSA-1474228">
    <property type="pathway name" value="Degradation of the extracellular matrix"/>
</dbReference>
<dbReference type="Reactome" id="R-HSA-193692">
    <property type="pathway name" value="Regulated proteolysis of p75NTR"/>
</dbReference>
<dbReference type="Reactome" id="R-HSA-205043">
    <property type="pathway name" value="NRIF signals cell death from the nucleus"/>
</dbReference>
<dbReference type="Reactome" id="R-HSA-2122948">
    <property type="pathway name" value="Activated NOTCH1 Transmits Signal to the Nucleus"/>
</dbReference>
<dbReference type="Reactome" id="R-HSA-2644606">
    <property type="pathway name" value="Constitutive Signaling by NOTCH1 PEST Domain Mutants"/>
</dbReference>
<dbReference type="Reactome" id="R-HSA-2894862">
    <property type="pathway name" value="Constitutive Signaling by NOTCH1 HD+PEST Domain Mutants"/>
</dbReference>
<dbReference type="Reactome" id="R-HSA-2979096">
    <property type="pathway name" value="NOTCH2 Activation and Transmission of Signal to the Nucleus"/>
</dbReference>
<dbReference type="Reactome" id="R-HSA-3928665">
    <property type="pathway name" value="EPH-ephrin mediated repulsion of cells"/>
</dbReference>
<dbReference type="Reactome" id="R-HSA-6798695">
    <property type="pathway name" value="Neutrophil degranulation"/>
</dbReference>
<dbReference type="Reactome" id="R-HSA-9013507">
    <property type="pathway name" value="NOTCH3 Activation and Transmission of Signal to the Nucleus"/>
</dbReference>
<dbReference type="Reactome" id="R-HSA-9013700">
    <property type="pathway name" value="NOTCH4 Activation and Transmission of Signal to the Nucleus"/>
</dbReference>
<dbReference type="Reactome" id="R-HSA-9017802">
    <property type="pathway name" value="Noncanonical activation of NOTCH3"/>
</dbReference>
<dbReference type="Reactome" id="R-HSA-977225">
    <property type="pathway name" value="Amyloid fiber formation"/>
</dbReference>
<dbReference type="Reactome" id="R-HSA-9839383">
    <property type="pathway name" value="TGFBR3 PTM regulation"/>
</dbReference>
<dbReference type="SignaLink" id="Q92542"/>
<dbReference type="SIGNOR" id="Q92542"/>
<dbReference type="BioGRID-ORCS" id="23385">
    <property type="hits" value="43 hits in 1155 CRISPR screens"/>
</dbReference>
<dbReference type="ChiTaRS" id="NCSTN">
    <property type="organism name" value="human"/>
</dbReference>
<dbReference type="EvolutionaryTrace" id="Q92542"/>
<dbReference type="GeneWiki" id="Nicastrin"/>
<dbReference type="GenomeRNAi" id="23385"/>
<dbReference type="Pharos" id="Q92542">
    <property type="development level" value="Tbio"/>
</dbReference>
<dbReference type="PRO" id="PR:Q92542"/>
<dbReference type="Proteomes" id="UP000005640">
    <property type="component" value="Chromosome 1"/>
</dbReference>
<dbReference type="RNAct" id="Q92542">
    <property type="molecule type" value="protein"/>
</dbReference>
<dbReference type="Bgee" id="ENSG00000162736">
    <property type="expression patterns" value="Expressed in stromal cell of endometrium and 200 other cell types or tissues"/>
</dbReference>
<dbReference type="ExpressionAtlas" id="Q92542">
    <property type="expression patterns" value="baseline and differential"/>
</dbReference>
<dbReference type="GO" id="GO:0035577">
    <property type="term" value="C:azurophil granule membrane"/>
    <property type="evidence" value="ECO:0000304"/>
    <property type="project" value="Reactome"/>
</dbReference>
<dbReference type="GO" id="GO:0005769">
    <property type="term" value="C:early endosome"/>
    <property type="evidence" value="ECO:0007669"/>
    <property type="project" value="Ensembl"/>
</dbReference>
<dbReference type="GO" id="GO:0005783">
    <property type="term" value="C:endoplasmic reticulum"/>
    <property type="evidence" value="ECO:0000314"/>
    <property type="project" value="HGNC-UCL"/>
</dbReference>
<dbReference type="GO" id="GO:0005789">
    <property type="term" value="C:endoplasmic reticulum membrane"/>
    <property type="evidence" value="ECO:0000303"/>
    <property type="project" value="ComplexPortal"/>
</dbReference>
<dbReference type="GO" id="GO:0010008">
    <property type="term" value="C:endosome membrane"/>
    <property type="evidence" value="ECO:0000304"/>
    <property type="project" value="Reactome"/>
</dbReference>
<dbReference type="GO" id="GO:0070062">
    <property type="term" value="C:extracellular exosome"/>
    <property type="evidence" value="ECO:0007005"/>
    <property type="project" value="UniProtKB"/>
</dbReference>
<dbReference type="GO" id="GO:0005925">
    <property type="term" value="C:focal adhesion"/>
    <property type="evidence" value="ECO:0007005"/>
    <property type="project" value="UniProtKB"/>
</dbReference>
<dbReference type="GO" id="GO:0070765">
    <property type="term" value="C:gamma-secretase complex"/>
    <property type="evidence" value="ECO:0000314"/>
    <property type="project" value="UniProtKB"/>
</dbReference>
<dbReference type="GO" id="GO:0005794">
    <property type="term" value="C:Golgi apparatus"/>
    <property type="evidence" value="ECO:0000314"/>
    <property type="project" value="HGNC-UCL"/>
</dbReference>
<dbReference type="GO" id="GO:0000139">
    <property type="term" value="C:Golgi membrane"/>
    <property type="evidence" value="ECO:0000303"/>
    <property type="project" value="ComplexPortal"/>
</dbReference>
<dbReference type="GO" id="GO:0005765">
    <property type="term" value="C:lysosomal membrane"/>
    <property type="evidence" value="ECO:0007005"/>
    <property type="project" value="UniProtKB"/>
</dbReference>
<dbReference type="GO" id="GO:0042470">
    <property type="term" value="C:melanosome"/>
    <property type="evidence" value="ECO:0007669"/>
    <property type="project" value="UniProtKB-SubCell"/>
</dbReference>
<dbReference type="GO" id="GO:0016020">
    <property type="term" value="C:membrane"/>
    <property type="evidence" value="ECO:0000314"/>
    <property type="project" value="UniProtKB"/>
</dbReference>
<dbReference type="GO" id="GO:0005886">
    <property type="term" value="C:plasma membrane"/>
    <property type="evidence" value="ECO:0000314"/>
    <property type="project" value="HGNC-UCL"/>
</dbReference>
<dbReference type="GO" id="GO:0042734">
    <property type="term" value="C:presynaptic membrane"/>
    <property type="evidence" value="ECO:0007669"/>
    <property type="project" value="Ensembl"/>
</dbReference>
<dbReference type="GO" id="GO:0042383">
    <property type="term" value="C:sarcolemma"/>
    <property type="evidence" value="ECO:0007669"/>
    <property type="project" value="Ensembl"/>
</dbReference>
<dbReference type="GO" id="GO:0008021">
    <property type="term" value="C:synaptic vesicle"/>
    <property type="evidence" value="ECO:0007669"/>
    <property type="project" value="Ensembl"/>
</dbReference>
<dbReference type="GO" id="GO:0042500">
    <property type="term" value="F:aspartic endopeptidase activity, intramembrane cleaving"/>
    <property type="evidence" value="ECO:0007669"/>
    <property type="project" value="Ensembl"/>
</dbReference>
<dbReference type="GO" id="GO:0051117">
    <property type="term" value="F:ATPase binding"/>
    <property type="evidence" value="ECO:0000353"/>
    <property type="project" value="ARUK-UCL"/>
</dbReference>
<dbReference type="GO" id="GO:0061133">
    <property type="term" value="F:endopeptidase activator activity"/>
    <property type="evidence" value="ECO:0000315"/>
    <property type="project" value="ARUK-UCL"/>
</dbReference>
<dbReference type="GO" id="GO:0070851">
    <property type="term" value="F:growth factor receptor binding"/>
    <property type="evidence" value="ECO:0000353"/>
    <property type="project" value="ARUK-UCL"/>
</dbReference>
<dbReference type="GO" id="GO:0030674">
    <property type="term" value="F:protein-macromolecule adaptor activity"/>
    <property type="evidence" value="ECO:0000315"/>
    <property type="project" value="ARUK-UCL"/>
</dbReference>
<dbReference type="GO" id="GO:0030534">
    <property type="term" value="P:adult behavior"/>
    <property type="evidence" value="ECO:0007669"/>
    <property type="project" value="Ensembl"/>
</dbReference>
<dbReference type="GO" id="GO:0042983">
    <property type="term" value="P:amyloid precursor protein biosynthetic process"/>
    <property type="evidence" value="ECO:0007669"/>
    <property type="project" value="Ensembl"/>
</dbReference>
<dbReference type="GO" id="GO:0042987">
    <property type="term" value="P:amyloid precursor protein catabolic process"/>
    <property type="evidence" value="ECO:0000314"/>
    <property type="project" value="ARUK-UCL"/>
</dbReference>
<dbReference type="GO" id="GO:0042982">
    <property type="term" value="P:amyloid precursor protein metabolic process"/>
    <property type="evidence" value="ECO:0000314"/>
    <property type="project" value="UniProtKB"/>
</dbReference>
<dbReference type="GO" id="GO:0034205">
    <property type="term" value="P:amyloid-beta formation"/>
    <property type="evidence" value="ECO:0000314"/>
    <property type="project" value="ARUK-UCL"/>
</dbReference>
<dbReference type="GO" id="GO:0071277">
    <property type="term" value="P:cellular response to calcium ion"/>
    <property type="evidence" value="ECO:0007669"/>
    <property type="project" value="Ensembl"/>
</dbReference>
<dbReference type="GO" id="GO:0022010">
    <property type="term" value="P:central nervous system myelination"/>
    <property type="evidence" value="ECO:0007669"/>
    <property type="project" value="Ensembl"/>
</dbReference>
<dbReference type="GO" id="GO:0021549">
    <property type="term" value="P:cerebellum development"/>
    <property type="evidence" value="ECO:0007669"/>
    <property type="project" value="Ensembl"/>
</dbReference>
<dbReference type="GO" id="GO:0050673">
    <property type="term" value="P:epithelial cell proliferation"/>
    <property type="evidence" value="ECO:0007669"/>
    <property type="project" value="Ensembl"/>
</dbReference>
<dbReference type="GO" id="GO:0007212">
    <property type="term" value="P:G protein-coupled dopamine receptor signaling pathway"/>
    <property type="evidence" value="ECO:0007669"/>
    <property type="project" value="Ensembl"/>
</dbReference>
<dbReference type="GO" id="GO:0007215">
    <property type="term" value="P:glutamate receptor signaling pathway"/>
    <property type="evidence" value="ECO:0007669"/>
    <property type="project" value="Ensembl"/>
</dbReference>
<dbReference type="GO" id="GO:0007611">
    <property type="term" value="P:learning or memory"/>
    <property type="evidence" value="ECO:0007669"/>
    <property type="project" value="Ensembl"/>
</dbReference>
<dbReference type="GO" id="GO:0006509">
    <property type="term" value="P:membrane protein ectodomain proteolysis"/>
    <property type="evidence" value="ECO:0000314"/>
    <property type="project" value="HGNC-UCL"/>
</dbReference>
<dbReference type="GO" id="GO:0031293">
    <property type="term" value="P:membrane protein intracellular domain proteolysis"/>
    <property type="evidence" value="ECO:0000314"/>
    <property type="project" value="ComplexPortal"/>
</dbReference>
<dbReference type="GO" id="GO:0002262">
    <property type="term" value="P:myeloid cell homeostasis"/>
    <property type="evidence" value="ECO:0007669"/>
    <property type="project" value="Ensembl"/>
</dbReference>
<dbReference type="GO" id="GO:0051402">
    <property type="term" value="P:neuron apoptotic process"/>
    <property type="evidence" value="ECO:0007669"/>
    <property type="project" value="Ensembl"/>
</dbReference>
<dbReference type="GO" id="GO:0007220">
    <property type="term" value="P:Notch receptor processing"/>
    <property type="evidence" value="ECO:0000314"/>
    <property type="project" value="ARUK-UCL"/>
</dbReference>
<dbReference type="GO" id="GO:0007219">
    <property type="term" value="P:Notch signaling pathway"/>
    <property type="evidence" value="ECO:0007669"/>
    <property type="project" value="UniProtKB-KW"/>
</dbReference>
<dbReference type="GO" id="GO:0042986">
    <property type="term" value="P:positive regulation of amyloid precursor protein biosynthetic process"/>
    <property type="evidence" value="ECO:0007669"/>
    <property type="project" value="Ensembl"/>
</dbReference>
<dbReference type="GO" id="GO:0016485">
    <property type="term" value="P:protein processing"/>
    <property type="evidence" value="ECO:0000314"/>
    <property type="project" value="HGNC-UCL"/>
</dbReference>
<dbReference type="GO" id="GO:0006508">
    <property type="term" value="P:proteolysis"/>
    <property type="evidence" value="ECO:0000303"/>
    <property type="project" value="UniProtKB"/>
</dbReference>
<dbReference type="GO" id="GO:1900271">
    <property type="term" value="P:regulation of long-term synaptic potentiation"/>
    <property type="evidence" value="ECO:0007669"/>
    <property type="project" value="Ensembl"/>
</dbReference>
<dbReference type="GO" id="GO:1990926">
    <property type="term" value="P:short-term synaptic potentiation"/>
    <property type="evidence" value="ECO:0007669"/>
    <property type="project" value="Ensembl"/>
</dbReference>
<dbReference type="GO" id="GO:0042098">
    <property type="term" value="P:T cell proliferation"/>
    <property type="evidence" value="ECO:0007669"/>
    <property type="project" value="Ensembl"/>
</dbReference>
<dbReference type="CDD" id="cd03881">
    <property type="entry name" value="M28_Nicastrin"/>
    <property type="match status" value="1"/>
</dbReference>
<dbReference type="FunFam" id="3.40.630.10:FF:000030">
    <property type="entry name" value="nicastrin"/>
    <property type="match status" value="1"/>
</dbReference>
<dbReference type="Gene3D" id="3.40.630.10">
    <property type="entry name" value="Zn peptidases"/>
    <property type="match status" value="1"/>
</dbReference>
<dbReference type="InterPro" id="IPR041084">
    <property type="entry name" value="Ncstrn_small"/>
</dbReference>
<dbReference type="InterPro" id="IPR008710">
    <property type="entry name" value="Nicastrin"/>
</dbReference>
<dbReference type="PANTHER" id="PTHR21092">
    <property type="entry name" value="NICASTRIN"/>
    <property type="match status" value="1"/>
</dbReference>
<dbReference type="PANTHER" id="PTHR21092:SF0">
    <property type="entry name" value="NICASTRIN"/>
    <property type="match status" value="1"/>
</dbReference>
<dbReference type="Pfam" id="PF18266">
    <property type="entry name" value="Ncstrn_small"/>
    <property type="match status" value="1"/>
</dbReference>
<dbReference type="Pfam" id="PF05450">
    <property type="entry name" value="Nicastrin"/>
    <property type="match status" value="1"/>
</dbReference>
<dbReference type="SUPFAM" id="SSF53187">
    <property type="entry name" value="Zn-dependent exopeptidases"/>
    <property type="match status" value="1"/>
</dbReference>
<proteinExistence type="evidence at protein level"/>
<organism>
    <name type="scientific">Homo sapiens</name>
    <name type="common">Human</name>
    <dbReference type="NCBI Taxonomy" id="9606"/>
    <lineage>
        <taxon>Eukaryota</taxon>
        <taxon>Metazoa</taxon>
        <taxon>Chordata</taxon>
        <taxon>Craniata</taxon>
        <taxon>Vertebrata</taxon>
        <taxon>Euteleostomi</taxon>
        <taxon>Mammalia</taxon>
        <taxon>Eutheria</taxon>
        <taxon>Euarchontoglires</taxon>
        <taxon>Primates</taxon>
        <taxon>Haplorrhini</taxon>
        <taxon>Catarrhini</taxon>
        <taxon>Hominidae</taxon>
        <taxon>Homo</taxon>
    </lineage>
</organism>
<feature type="signal peptide" evidence="1">
    <location>
        <begin position="1"/>
        <end position="33"/>
    </location>
</feature>
<feature type="chain" id="PRO_0000019681" description="Nicastrin">
    <location>
        <begin position="34"/>
        <end position="709"/>
    </location>
</feature>
<feature type="topological domain" description="Extracellular" evidence="25 26">
    <location>
        <begin position="34"/>
        <end position="669"/>
    </location>
</feature>
<feature type="transmembrane region" description="Helical" evidence="25 26">
    <location>
        <begin position="670"/>
        <end position="690"/>
    </location>
</feature>
<feature type="topological domain" description="Cytoplasmic" evidence="25 26">
    <location>
        <begin position="691"/>
        <end position="709"/>
    </location>
</feature>
<feature type="glycosylation site" description="N-linked (GlcNAc...) asparagine" evidence="9 16 19 20 28 33 34">
    <location>
        <position position="45"/>
    </location>
</feature>
<feature type="glycosylation site" description="N-linked (GlcNAc...) asparagine" evidence="1 16 19 20 28 33 34">
    <location>
        <position position="55"/>
    </location>
</feature>
<feature type="glycosylation site" description="N-linked (GlcNAc...) asparagine" evidence="9 16 19 20 28 33 34">
    <location>
        <position position="187"/>
    </location>
</feature>
<feature type="glycosylation site" description="N-linked (GlcNAc...) asparagine" evidence="1">
    <location>
        <position position="200"/>
    </location>
</feature>
<feature type="glycosylation site" description="N-linked (GlcNAc...) asparagine" evidence="1">
    <location>
        <position position="204"/>
    </location>
</feature>
<feature type="glycosylation site" description="N-linked (GlcNAc...) asparagine" evidence="1 16 19 20 28 33 34">
    <location>
        <position position="264"/>
    </location>
</feature>
<feature type="glycosylation site" description="N-linked (GlcNAc...) asparagine" evidence="7 9 16 19 20 28 33 34">
    <location>
        <position position="387"/>
    </location>
</feature>
<feature type="glycosylation site" description="N-linked (GlcNAc...) asparagine" evidence="1">
    <location>
        <position position="417"/>
    </location>
</feature>
<feature type="glycosylation site" description="N-linked (GlcNAc...) asparagine" evidence="1 16 19 20 28 33 34">
    <location>
        <position position="435"/>
    </location>
</feature>
<feature type="glycosylation site" description="N-linked (GlcNAc...) asparagine" evidence="1 16 19 20 28 33 34">
    <location>
        <position position="464"/>
    </location>
</feature>
<feature type="glycosylation site" description="N-linked (GlcNAc...) asparagine" evidence="1 16 19 20 28 33 34">
    <location>
        <position position="506"/>
    </location>
</feature>
<feature type="glycosylation site" description="N-linked (GlcNAc...) asparagine" evidence="1 16 19 20 28 33 34">
    <location>
        <position position="530"/>
    </location>
</feature>
<feature type="glycosylation site" description="N-linked (GlcNAc...) asparagine" evidence="1 16 19 20 28 33 34">
    <location>
        <position position="562"/>
    </location>
</feature>
<feature type="glycosylation site" description="N-linked (GlcNAc...) asparagine" evidence="1 16 19 20 28 33 34">
    <location>
        <position position="573"/>
    </location>
</feature>
<feature type="glycosylation site" description="N-linked (GlcNAc...) asparagine" evidence="20 34">
    <location>
        <position position="580"/>
    </location>
</feature>
<feature type="glycosylation site" description="N-linked (GlcNAc...) asparagine" evidence="10">
    <location>
        <position position="612"/>
    </location>
</feature>
<feature type="disulfide bond" evidence="16 17 19 20 23 24 27 28 29 30 31 32 33 34">
    <location>
        <begin position="50"/>
        <end position="62"/>
    </location>
</feature>
<feature type="disulfide bond" evidence="16 17 19 20 28 29 30 31 32 33 34">
    <location>
        <begin position="140"/>
        <end position="159"/>
    </location>
</feature>
<feature type="disulfide bond" evidence="16 17 24 27 28 29 30 31 32">
    <location>
        <begin position="195"/>
        <end position="213"/>
    </location>
</feature>
<feature type="disulfide bond" evidence="16 17 19 20 24 27 28 29 30 31 32 33 34">
    <location>
        <begin position="230"/>
        <end position="248"/>
    </location>
</feature>
<feature type="disulfide bond" evidence="16 17 19 20 28 29 30 31 32 33 34">
    <location>
        <begin position="586"/>
        <end position="620"/>
    </location>
</feature>
<feature type="splice variant" id="VSP_008385" description="In isoform 2." evidence="21">
    <location>
        <begin position="1"/>
        <end position="20"/>
    </location>
</feature>
<feature type="splice variant" id="VSP_008386" description="In isoform 2." evidence="21">
    <original>LSFCVLLAG</original>
    <variation>MDFNLILES</variation>
    <location>
        <begin position="21"/>
        <end position="29"/>
    </location>
</feature>
<feature type="sequence variant" id="VAR_050274" description="In dbSNP:rs12045198.">
    <original>V</original>
    <variation>I</variation>
    <location>
        <position position="75"/>
    </location>
</feature>
<feature type="sequence variant" id="VAR_050275" description="In dbSNP:rs35603924.">
    <original>E</original>
    <variation>D</variation>
    <location>
        <position position="77"/>
    </location>
</feature>
<feature type="sequence variant" id="VAR_067756" description="In ACNINV1." evidence="13">
    <original>P</original>
    <variation>R</variation>
    <location>
        <position position="211"/>
    </location>
</feature>
<feature type="mutagenesis site" description="Increases production of amyloid-beta (beta-APP40 and beta-APP42) in APP processing." evidence="2">
    <original>DY</original>
    <variation>AA</variation>
    <location>
        <begin position="336"/>
        <end position="337"/>
    </location>
</feature>
<feature type="mutagenesis site" description="No effect on gamma-secretase activity." evidence="19">
    <original>W</original>
    <variation>A</variation>
    <variation>F</variation>
    <location>
        <position position="653"/>
    </location>
</feature>
<feature type="sequence conflict" description="In Ref. 6; AAH47621." evidence="22" ref="6">
    <original>R</original>
    <variation>H</variation>
    <location>
        <position position="657"/>
    </location>
</feature>
<feature type="helix" evidence="43">
    <location>
        <begin position="37"/>
        <end position="39"/>
    </location>
</feature>
<feature type="strand" evidence="43">
    <location>
        <begin position="42"/>
        <end position="44"/>
    </location>
</feature>
<feature type="strand" evidence="43">
    <location>
        <begin position="46"/>
        <end position="49"/>
    </location>
</feature>
<feature type="strand" evidence="43">
    <location>
        <begin position="59"/>
        <end position="61"/>
    </location>
</feature>
<feature type="strand" evidence="43">
    <location>
        <begin position="69"/>
        <end position="75"/>
    </location>
</feature>
<feature type="strand" evidence="38">
    <location>
        <begin position="78"/>
        <end position="80"/>
    </location>
</feature>
<feature type="helix" evidence="43">
    <location>
        <begin position="81"/>
        <end position="86"/>
    </location>
</feature>
<feature type="strand" evidence="43">
    <location>
        <begin position="93"/>
        <end position="99"/>
    </location>
</feature>
<feature type="helix" evidence="43">
    <location>
        <begin position="100"/>
        <end position="102"/>
    </location>
</feature>
<feature type="helix" evidence="43">
    <location>
        <begin position="105"/>
        <end position="113"/>
    </location>
</feature>
<feature type="strand" evidence="43">
    <location>
        <begin position="116"/>
        <end position="124"/>
    </location>
</feature>
<feature type="strand" evidence="39">
    <location>
        <begin position="139"/>
        <end position="142"/>
    </location>
</feature>
<feature type="helix" evidence="43">
    <location>
        <begin position="143"/>
        <end position="145"/>
    </location>
</feature>
<feature type="turn" evidence="43">
    <location>
        <begin position="150"/>
        <end position="152"/>
    </location>
</feature>
<feature type="helix" evidence="43">
    <location>
        <begin position="154"/>
        <end position="156"/>
    </location>
</feature>
<feature type="strand" evidence="43">
    <location>
        <begin position="159"/>
        <end position="161"/>
    </location>
</feature>
<feature type="strand" evidence="46">
    <location>
        <begin position="166"/>
        <end position="168"/>
    </location>
</feature>
<feature type="helix" evidence="43">
    <location>
        <begin position="171"/>
        <end position="173"/>
    </location>
</feature>
<feature type="strand" evidence="45">
    <location>
        <begin position="174"/>
        <end position="178"/>
    </location>
</feature>
<feature type="strand" evidence="43">
    <location>
        <begin position="180"/>
        <end position="183"/>
    </location>
</feature>
<feature type="helix" evidence="43">
    <location>
        <begin position="186"/>
        <end position="199"/>
    </location>
</feature>
<feature type="helix" evidence="43">
    <location>
        <begin position="203"/>
        <end position="205"/>
    </location>
</feature>
<feature type="strand" evidence="43">
    <location>
        <begin position="212"/>
        <end position="218"/>
    </location>
</feature>
<feature type="strand" evidence="37">
    <location>
        <begin position="220"/>
        <end position="222"/>
    </location>
</feature>
<feature type="helix" evidence="43">
    <location>
        <begin position="227"/>
        <end position="240"/>
    </location>
</feature>
<feature type="strand" evidence="44">
    <location>
        <begin position="241"/>
        <end position="243"/>
    </location>
</feature>
<feature type="strand" evidence="39">
    <location>
        <begin position="248"/>
        <end position="250"/>
    </location>
</feature>
<feature type="strand" evidence="43">
    <location>
        <begin position="253"/>
        <end position="261"/>
    </location>
</feature>
<feature type="strand" evidence="43">
    <location>
        <begin position="265"/>
        <end position="267"/>
    </location>
</feature>
<feature type="strand" evidence="37">
    <location>
        <begin position="271"/>
        <end position="273"/>
    </location>
</feature>
<feature type="strand" evidence="43">
    <location>
        <begin position="275"/>
        <end position="281"/>
    </location>
</feature>
<feature type="strand" evidence="42">
    <location>
        <begin position="287"/>
        <end position="290"/>
    </location>
</feature>
<feature type="turn" evidence="43">
    <location>
        <begin position="295"/>
        <end position="298"/>
    </location>
</feature>
<feature type="helix" evidence="43">
    <location>
        <begin position="299"/>
        <end position="312"/>
    </location>
</feature>
<feature type="strand" evidence="44">
    <location>
        <begin position="318"/>
        <end position="320"/>
    </location>
</feature>
<feature type="strand" evidence="43">
    <location>
        <begin position="322"/>
        <end position="331"/>
    </location>
</feature>
<feature type="turn" evidence="43">
    <location>
        <begin position="333"/>
        <end position="336"/>
    </location>
</feature>
<feature type="helix" evidence="43">
    <location>
        <begin position="338"/>
        <end position="348"/>
    </location>
</feature>
<feature type="strand" evidence="43">
    <location>
        <begin position="352"/>
        <end position="354"/>
    </location>
</feature>
<feature type="turn" evidence="43">
    <location>
        <begin position="356"/>
        <end position="358"/>
    </location>
</feature>
<feature type="strand" evidence="43">
    <location>
        <begin position="359"/>
        <end position="365"/>
    </location>
</feature>
<feature type="strand" evidence="43">
    <location>
        <begin position="374"/>
        <end position="379"/>
    </location>
</feature>
<feature type="helix" evidence="43">
    <location>
        <begin position="384"/>
        <end position="386"/>
    </location>
</feature>
<feature type="helix" evidence="43">
    <location>
        <begin position="388"/>
        <end position="405"/>
    </location>
</feature>
<feature type="strand" evidence="38">
    <location>
        <begin position="406"/>
        <end position="408"/>
    </location>
</feature>
<feature type="strand" evidence="43">
    <location>
        <begin position="412"/>
        <end position="414"/>
    </location>
</feature>
<feature type="strand" evidence="39">
    <location>
        <begin position="417"/>
        <end position="419"/>
    </location>
</feature>
<feature type="helix" evidence="43">
    <location>
        <begin position="427"/>
        <end position="434"/>
    </location>
</feature>
<feature type="strand" evidence="43">
    <location>
        <begin position="438"/>
        <end position="443"/>
    </location>
</feature>
<feature type="strand" evidence="43">
    <location>
        <begin position="445"/>
        <end position="447"/>
    </location>
</feature>
<feature type="turn" evidence="39">
    <location>
        <begin position="451"/>
        <end position="454"/>
    </location>
</feature>
<feature type="helix" evidence="43">
    <location>
        <begin position="460"/>
        <end position="463"/>
    </location>
</feature>
<feature type="strand" evidence="42">
    <location>
        <begin position="469"/>
        <end position="471"/>
    </location>
</feature>
<feature type="helix" evidence="43">
    <location>
        <begin position="473"/>
        <end position="478"/>
    </location>
</feature>
<feature type="helix" evidence="43">
    <location>
        <begin position="482"/>
        <end position="501"/>
    </location>
</feature>
<feature type="helix" evidence="40">
    <location>
        <begin position="508"/>
        <end position="510"/>
    </location>
</feature>
<feature type="helix" evidence="43">
    <location>
        <begin position="515"/>
        <end position="526"/>
    </location>
</feature>
<feature type="helix" evidence="43">
    <location>
        <begin position="532"/>
        <end position="535"/>
    </location>
</feature>
<feature type="helix" evidence="43">
    <location>
        <begin position="540"/>
        <end position="545"/>
    </location>
</feature>
<feature type="strand" evidence="43">
    <location>
        <begin position="557"/>
        <end position="560"/>
    </location>
</feature>
<feature type="helix" evidence="43">
    <location>
        <begin position="562"/>
        <end position="575"/>
    </location>
</feature>
<feature type="strand" evidence="43">
    <location>
        <begin position="577"/>
        <end position="579"/>
    </location>
</feature>
<feature type="helix" evidence="43">
    <location>
        <begin position="583"/>
        <end position="587"/>
    </location>
</feature>
<feature type="strand" evidence="43">
    <location>
        <begin position="591"/>
        <end position="594"/>
    </location>
</feature>
<feature type="strand" evidence="43">
    <location>
        <begin position="597"/>
        <end position="599"/>
    </location>
</feature>
<feature type="strand" evidence="43">
    <location>
        <begin position="601"/>
        <end position="605"/>
    </location>
</feature>
<feature type="turn" evidence="41">
    <location>
        <begin position="611"/>
        <end position="614"/>
    </location>
</feature>
<feature type="strand" evidence="43">
    <location>
        <begin position="619"/>
        <end position="623"/>
    </location>
</feature>
<feature type="strand" evidence="43">
    <location>
        <begin position="626"/>
        <end position="630"/>
    </location>
</feature>
<feature type="helix" evidence="43">
    <location>
        <begin position="633"/>
        <end position="636"/>
    </location>
</feature>
<feature type="strand" evidence="43">
    <location>
        <begin position="643"/>
        <end position="645"/>
    </location>
</feature>
<feature type="strand" evidence="39">
    <location>
        <begin position="649"/>
        <end position="651"/>
    </location>
</feature>
<feature type="strand" evidence="38">
    <location>
        <begin position="652"/>
        <end position="654"/>
    </location>
</feature>
<feature type="strand" evidence="43">
    <location>
        <begin position="657"/>
        <end position="663"/>
    </location>
</feature>
<feature type="helix" evidence="43">
    <location>
        <begin position="666"/>
        <end position="692"/>
    </location>
</feature>
<feature type="helix" evidence="43">
    <location>
        <begin position="694"/>
        <end position="697"/>
    </location>
</feature>
<feature type="strand" evidence="36">
    <location>
        <begin position="698"/>
        <end position="700"/>
    </location>
</feature>
<feature type="helix" evidence="35">
    <location>
        <begin position="704"/>
        <end position="706"/>
    </location>
</feature>
<accession>Q92542</accession>
<accession>Q5T207</accession>
<accession>Q5T208</accession>
<accession>Q86VV5</accession>
<sequence length="709" mass="78411">MATAGGGSGADPGSRGLLRLLSFCVLLAGLCRGNSVERKIYIPLNKTAPCVRLLNATHQIGCQSSISGDTGVIHVVEKEEDLQWVLTDGPNPPYMVLLESKHFTRDLMEKLKGRTSRIAGLAVSLTKPSPASGFSPSVQCPNDGFGVYSNSYGPEFAHCREIQWNSLGNGLAYEDFSFPIFLLEDENETKVIKQCYQDHNLSQNGSAPTFPLCAMQLFSHMHAVISTATCMRRSSIQSTFSINPEIVCDPLSDYNVWSMLKPINTTGTLKPDDRVVVAATRLDSRSFFWNVAPGAESAVASFVTQLAAAEALQKAPDVTTLPRNVMFVFFQGETFDYIGSSRMVYDMEKGKFPVQLENVDSFVELGQVALRTSLELWMHTDPVSQKNESVRNQVEDLLATLEKSGAGVPAVILRRPNQSQPLPPSSLQRFLRARNISGVVLADHSGAFHNKYYQSIYDTAENINVSYPEWLSPEEDLNFVTDTAKALADVATVLGRALYELAGGTNFSDTVQADPQTVTRLLYGFLIKANNSWFQSILRQDLRSYLGDGPLQHYIAVSSPTNTTYVVQYALANLTGTVVNLTREQCQDPSKVPSENKDLYEYSWVQGPLHSNETDRLPRCVRSTARLARALSPAFELSQWSSTEYSTWTESRWKDIRARIFLIASKELELITLTVGFGILIFSLIVTYCINAKADVLFIAPREPGAVSY</sequence>